<name>ZAPD_CITK8</name>
<reference key="1">
    <citation type="submission" date="2007-08" db="EMBL/GenBank/DDBJ databases">
        <authorList>
            <consortium name="The Citrobacter koseri Genome Sequencing Project"/>
            <person name="McClelland M."/>
            <person name="Sanderson E.K."/>
            <person name="Porwollik S."/>
            <person name="Spieth J."/>
            <person name="Clifton W.S."/>
            <person name="Latreille P."/>
            <person name="Courtney L."/>
            <person name="Wang C."/>
            <person name="Pepin K."/>
            <person name="Bhonagiri V."/>
            <person name="Nash W."/>
            <person name="Johnson M."/>
            <person name="Thiruvilangam P."/>
            <person name="Wilson R."/>
        </authorList>
    </citation>
    <scope>NUCLEOTIDE SEQUENCE [LARGE SCALE GENOMIC DNA]</scope>
    <source>
        <strain>ATCC BAA-895 / CDC 4225-83 / SGSC4696</strain>
    </source>
</reference>
<accession>A8ALJ5</accession>
<gene>
    <name evidence="1" type="primary">zapD</name>
    <name type="ordered locus">CKO_03274</name>
</gene>
<evidence type="ECO:0000255" key="1">
    <source>
        <dbReference type="HAMAP-Rule" id="MF_01092"/>
    </source>
</evidence>
<keyword id="KW-0131">Cell cycle</keyword>
<keyword id="KW-0132">Cell division</keyword>
<keyword id="KW-0963">Cytoplasm</keyword>
<keyword id="KW-1185">Reference proteome</keyword>
<keyword id="KW-0717">Septation</keyword>
<comment type="function">
    <text evidence="1">Cell division factor that enhances FtsZ-ring assembly. Directly interacts with FtsZ and promotes bundling of FtsZ protofilaments, with a reduction in FtsZ GTPase activity.</text>
</comment>
<comment type="subunit">
    <text evidence="1">Interacts with FtsZ.</text>
</comment>
<comment type="subcellular location">
    <subcellularLocation>
        <location evidence="1">Cytoplasm</location>
    </subcellularLocation>
    <text evidence="1">Localizes to mid-cell in an FtsZ-dependent manner.</text>
</comment>
<comment type="similarity">
    <text evidence="1">Belongs to the ZapD family.</text>
</comment>
<proteinExistence type="inferred from homology"/>
<sequence length="247" mass="28477">MHTQVLFEHPLNEKMRTWLRIEFLIQQLSVNLPLADHADALHFFRNIGDLLDVFERGEVRTELLKELERQQRKLQAWVEVPGVDQSRIEALRQQLKTAGSILISAPRIGQQLREDRLIALVRQRLSIPGGCCSFDLPTLHIWLHLPQEQRDAQVETWIASLNPLNQALTLILDLIRNSSPFRKQTSLNGFYQDNGDDADLLRLQLALDSQLYPQISGHKSRFAIRFMPLDSENGLVPERLDFELACC</sequence>
<dbReference type="EMBL" id="CP000822">
    <property type="protein sequence ID" value="ABV14358.1"/>
    <property type="molecule type" value="Genomic_DNA"/>
</dbReference>
<dbReference type="RefSeq" id="WP_012134063.1">
    <property type="nucleotide sequence ID" value="NC_009792.1"/>
</dbReference>
<dbReference type="SMR" id="A8ALJ5"/>
<dbReference type="STRING" id="290338.CKO_03274"/>
<dbReference type="GeneID" id="45137047"/>
<dbReference type="KEGG" id="cko:CKO_03274"/>
<dbReference type="HOGENOM" id="CLU_076303_0_0_6"/>
<dbReference type="OrthoDB" id="5294622at2"/>
<dbReference type="Proteomes" id="UP000008148">
    <property type="component" value="Chromosome"/>
</dbReference>
<dbReference type="GO" id="GO:0032153">
    <property type="term" value="C:cell division site"/>
    <property type="evidence" value="ECO:0007669"/>
    <property type="project" value="TreeGrafter"/>
</dbReference>
<dbReference type="GO" id="GO:0005737">
    <property type="term" value="C:cytoplasm"/>
    <property type="evidence" value="ECO:0007669"/>
    <property type="project" value="UniProtKB-SubCell"/>
</dbReference>
<dbReference type="GO" id="GO:0000917">
    <property type="term" value="P:division septum assembly"/>
    <property type="evidence" value="ECO:0007669"/>
    <property type="project" value="UniProtKB-KW"/>
</dbReference>
<dbReference type="GO" id="GO:0043093">
    <property type="term" value="P:FtsZ-dependent cytokinesis"/>
    <property type="evidence" value="ECO:0007669"/>
    <property type="project" value="UniProtKB-UniRule"/>
</dbReference>
<dbReference type="FunFam" id="1.10.3900.10:FF:000001">
    <property type="entry name" value="Cell division protein ZapD"/>
    <property type="match status" value="1"/>
</dbReference>
<dbReference type="FunFam" id="2.60.440.10:FF:000001">
    <property type="entry name" value="Cell division protein ZapD"/>
    <property type="match status" value="1"/>
</dbReference>
<dbReference type="Gene3D" id="1.10.3900.10">
    <property type="entry name" value="YacF-like"/>
    <property type="match status" value="1"/>
</dbReference>
<dbReference type="Gene3D" id="2.60.440.10">
    <property type="entry name" value="YacF-like domains"/>
    <property type="match status" value="1"/>
</dbReference>
<dbReference type="HAMAP" id="MF_01092">
    <property type="entry name" value="ZapD"/>
    <property type="match status" value="1"/>
</dbReference>
<dbReference type="InterPro" id="IPR009777">
    <property type="entry name" value="ZapD"/>
</dbReference>
<dbReference type="InterPro" id="IPR027462">
    <property type="entry name" value="ZapD_C"/>
</dbReference>
<dbReference type="InterPro" id="IPR036268">
    <property type="entry name" value="ZapD_sf"/>
</dbReference>
<dbReference type="NCBIfam" id="NF003653">
    <property type="entry name" value="PRK05287.1-1"/>
    <property type="match status" value="1"/>
</dbReference>
<dbReference type="NCBIfam" id="NF003655">
    <property type="entry name" value="PRK05287.1-3"/>
    <property type="match status" value="1"/>
</dbReference>
<dbReference type="PANTHER" id="PTHR39455">
    <property type="entry name" value="CELL DIVISION PROTEIN ZAPD"/>
    <property type="match status" value="1"/>
</dbReference>
<dbReference type="PANTHER" id="PTHR39455:SF1">
    <property type="entry name" value="CELL DIVISION PROTEIN ZAPD"/>
    <property type="match status" value="1"/>
</dbReference>
<dbReference type="Pfam" id="PF07072">
    <property type="entry name" value="ZapD"/>
    <property type="match status" value="1"/>
</dbReference>
<dbReference type="SUPFAM" id="SSF160950">
    <property type="entry name" value="YacF-like"/>
    <property type="match status" value="1"/>
</dbReference>
<organism>
    <name type="scientific">Citrobacter koseri (strain ATCC BAA-895 / CDC 4225-83 / SGSC4696)</name>
    <dbReference type="NCBI Taxonomy" id="290338"/>
    <lineage>
        <taxon>Bacteria</taxon>
        <taxon>Pseudomonadati</taxon>
        <taxon>Pseudomonadota</taxon>
        <taxon>Gammaproteobacteria</taxon>
        <taxon>Enterobacterales</taxon>
        <taxon>Enterobacteriaceae</taxon>
        <taxon>Citrobacter</taxon>
    </lineage>
</organism>
<protein>
    <recommendedName>
        <fullName evidence="1">Cell division protein ZapD</fullName>
    </recommendedName>
    <alternativeName>
        <fullName evidence="1">Z ring-associated protein D</fullName>
    </alternativeName>
</protein>
<feature type="chain" id="PRO_1000064904" description="Cell division protein ZapD">
    <location>
        <begin position="1"/>
        <end position="247"/>
    </location>
</feature>